<name>RS12_HAHCH</name>
<accession>Q2S907</accession>
<keyword id="KW-0488">Methylation</keyword>
<keyword id="KW-1185">Reference proteome</keyword>
<keyword id="KW-0687">Ribonucleoprotein</keyword>
<keyword id="KW-0689">Ribosomal protein</keyword>
<keyword id="KW-0694">RNA-binding</keyword>
<keyword id="KW-0699">rRNA-binding</keyword>
<keyword id="KW-0820">tRNA-binding</keyword>
<proteinExistence type="inferred from homology"/>
<organism>
    <name type="scientific">Hahella chejuensis (strain KCTC 2396)</name>
    <dbReference type="NCBI Taxonomy" id="349521"/>
    <lineage>
        <taxon>Bacteria</taxon>
        <taxon>Pseudomonadati</taxon>
        <taxon>Pseudomonadota</taxon>
        <taxon>Gammaproteobacteria</taxon>
        <taxon>Oceanospirillales</taxon>
        <taxon>Hahellaceae</taxon>
        <taxon>Hahella</taxon>
    </lineage>
</organism>
<evidence type="ECO:0000250" key="1"/>
<evidence type="ECO:0000255" key="2">
    <source>
        <dbReference type="HAMAP-Rule" id="MF_00403"/>
    </source>
</evidence>
<evidence type="ECO:0000256" key="3">
    <source>
        <dbReference type="SAM" id="MobiDB-lite"/>
    </source>
</evidence>
<evidence type="ECO:0000305" key="4"/>
<sequence>MATINQLVRKPRSRKVAKSDVPALQGCPQRRGVCTRVYTTTPKKPNSALRKVCRVRLTNGYEVTSYIGGEGHNLQEHSVVLIRGGRVKDLPGVRYHTVRGTLDTAGVNDRRQGRSKYGAKRGKS</sequence>
<gene>
    <name evidence="2" type="primary">rpsL</name>
    <name type="ordered locus">HCH_06222</name>
</gene>
<feature type="chain" id="PRO_0000238132" description="Small ribosomal subunit protein uS12">
    <location>
        <begin position="1"/>
        <end position="124"/>
    </location>
</feature>
<feature type="region of interest" description="Disordered" evidence="3">
    <location>
        <begin position="1"/>
        <end position="22"/>
    </location>
</feature>
<feature type="region of interest" description="Disordered" evidence="3">
    <location>
        <begin position="104"/>
        <end position="124"/>
    </location>
</feature>
<feature type="compositionally biased region" description="Basic residues" evidence="3">
    <location>
        <begin position="113"/>
        <end position="124"/>
    </location>
</feature>
<feature type="modified residue" description="3-methylthioaspartic acid" evidence="1">
    <location>
        <position position="89"/>
    </location>
</feature>
<comment type="function">
    <text evidence="2">With S4 and S5 plays an important role in translational accuracy.</text>
</comment>
<comment type="function">
    <text evidence="2">Interacts with and stabilizes bases of the 16S rRNA that are involved in tRNA selection in the A site and with the mRNA backbone. Located at the interface of the 30S and 50S subunits, it traverses the body of the 30S subunit contacting proteins on the other side and probably holding the rRNA structure together. The combined cluster of proteins S8, S12 and S17 appears to hold together the shoulder and platform of the 30S subunit.</text>
</comment>
<comment type="subunit">
    <text evidence="2">Part of the 30S ribosomal subunit. Contacts proteins S8 and S17. May interact with IF1 in the 30S initiation complex.</text>
</comment>
<comment type="similarity">
    <text evidence="2">Belongs to the universal ribosomal protein uS12 family.</text>
</comment>
<dbReference type="EMBL" id="CP000155">
    <property type="protein sequence ID" value="ABC32867.1"/>
    <property type="molecule type" value="Genomic_DNA"/>
</dbReference>
<dbReference type="RefSeq" id="WP_011399925.1">
    <property type="nucleotide sequence ID" value="NC_007645.1"/>
</dbReference>
<dbReference type="SMR" id="Q2S907"/>
<dbReference type="STRING" id="349521.HCH_06222"/>
<dbReference type="KEGG" id="hch:HCH_06222"/>
<dbReference type="eggNOG" id="COG0048">
    <property type="taxonomic scope" value="Bacteria"/>
</dbReference>
<dbReference type="HOGENOM" id="CLU_104295_1_2_6"/>
<dbReference type="OrthoDB" id="9802366at2"/>
<dbReference type="Proteomes" id="UP000000238">
    <property type="component" value="Chromosome"/>
</dbReference>
<dbReference type="GO" id="GO:0015935">
    <property type="term" value="C:small ribosomal subunit"/>
    <property type="evidence" value="ECO:0007669"/>
    <property type="project" value="InterPro"/>
</dbReference>
<dbReference type="GO" id="GO:0019843">
    <property type="term" value="F:rRNA binding"/>
    <property type="evidence" value="ECO:0007669"/>
    <property type="project" value="UniProtKB-UniRule"/>
</dbReference>
<dbReference type="GO" id="GO:0003735">
    <property type="term" value="F:structural constituent of ribosome"/>
    <property type="evidence" value="ECO:0007669"/>
    <property type="project" value="InterPro"/>
</dbReference>
<dbReference type="GO" id="GO:0000049">
    <property type="term" value="F:tRNA binding"/>
    <property type="evidence" value="ECO:0007669"/>
    <property type="project" value="UniProtKB-UniRule"/>
</dbReference>
<dbReference type="GO" id="GO:0006412">
    <property type="term" value="P:translation"/>
    <property type="evidence" value="ECO:0007669"/>
    <property type="project" value="UniProtKB-UniRule"/>
</dbReference>
<dbReference type="CDD" id="cd03368">
    <property type="entry name" value="Ribosomal_S12"/>
    <property type="match status" value="1"/>
</dbReference>
<dbReference type="FunFam" id="2.40.50.140:FF:000001">
    <property type="entry name" value="30S ribosomal protein S12"/>
    <property type="match status" value="1"/>
</dbReference>
<dbReference type="Gene3D" id="2.40.50.140">
    <property type="entry name" value="Nucleic acid-binding proteins"/>
    <property type="match status" value="1"/>
</dbReference>
<dbReference type="HAMAP" id="MF_00403_B">
    <property type="entry name" value="Ribosomal_uS12_B"/>
    <property type="match status" value="1"/>
</dbReference>
<dbReference type="InterPro" id="IPR012340">
    <property type="entry name" value="NA-bd_OB-fold"/>
</dbReference>
<dbReference type="InterPro" id="IPR006032">
    <property type="entry name" value="Ribosomal_uS12"/>
</dbReference>
<dbReference type="InterPro" id="IPR005679">
    <property type="entry name" value="Ribosomal_uS12_bac"/>
</dbReference>
<dbReference type="NCBIfam" id="TIGR00981">
    <property type="entry name" value="rpsL_bact"/>
    <property type="match status" value="1"/>
</dbReference>
<dbReference type="PANTHER" id="PTHR11652">
    <property type="entry name" value="30S RIBOSOMAL PROTEIN S12 FAMILY MEMBER"/>
    <property type="match status" value="1"/>
</dbReference>
<dbReference type="Pfam" id="PF00164">
    <property type="entry name" value="Ribosom_S12_S23"/>
    <property type="match status" value="1"/>
</dbReference>
<dbReference type="PIRSF" id="PIRSF002133">
    <property type="entry name" value="Ribosomal_S12/S23"/>
    <property type="match status" value="1"/>
</dbReference>
<dbReference type="PRINTS" id="PR01034">
    <property type="entry name" value="RIBOSOMALS12"/>
</dbReference>
<dbReference type="SUPFAM" id="SSF50249">
    <property type="entry name" value="Nucleic acid-binding proteins"/>
    <property type="match status" value="1"/>
</dbReference>
<dbReference type="PROSITE" id="PS00055">
    <property type="entry name" value="RIBOSOMAL_S12"/>
    <property type="match status" value="1"/>
</dbReference>
<reference key="1">
    <citation type="journal article" date="2005" name="Nucleic Acids Res.">
        <title>Genomic blueprint of Hahella chejuensis, a marine microbe producing an algicidal agent.</title>
        <authorList>
            <person name="Jeong H."/>
            <person name="Yim J.H."/>
            <person name="Lee C."/>
            <person name="Choi S.-H."/>
            <person name="Park Y.K."/>
            <person name="Yoon S.H."/>
            <person name="Hur C.-G."/>
            <person name="Kang H.-Y."/>
            <person name="Kim D."/>
            <person name="Lee H.H."/>
            <person name="Park K.H."/>
            <person name="Park S.-H."/>
            <person name="Park H.-S."/>
            <person name="Lee H.K."/>
            <person name="Oh T.K."/>
            <person name="Kim J.F."/>
        </authorList>
    </citation>
    <scope>NUCLEOTIDE SEQUENCE [LARGE SCALE GENOMIC DNA]</scope>
    <source>
        <strain>KCTC 2396</strain>
    </source>
</reference>
<protein>
    <recommendedName>
        <fullName evidence="2">Small ribosomal subunit protein uS12</fullName>
    </recommendedName>
    <alternativeName>
        <fullName evidence="4">30S ribosomal protein S12</fullName>
    </alternativeName>
</protein>